<feature type="chain" id="PRO_1000184155" description="Large ribosomal subunit protein uL30">
    <location>
        <begin position="1"/>
        <end position="59"/>
    </location>
</feature>
<dbReference type="EMBL" id="AP011115">
    <property type="protein sequence ID" value="BAH54451.1"/>
    <property type="molecule type" value="Genomic_DNA"/>
</dbReference>
<dbReference type="RefSeq" id="WP_005253859.1">
    <property type="nucleotide sequence ID" value="NC_012522.1"/>
</dbReference>
<dbReference type="SMR" id="C1B030"/>
<dbReference type="STRING" id="632772.ROP_62040"/>
<dbReference type="KEGG" id="rop:ROP_62040"/>
<dbReference type="PATRIC" id="fig|632772.20.peg.6480"/>
<dbReference type="HOGENOM" id="CLU_131047_2_0_11"/>
<dbReference type="OrthoDB" id="9812790at2"/>
<dbReference type="Proteomes" id="UP000002212">
    <property type="component" value="Chromosome"/>
</dbReference>
<dbReference type="GO" id="GO:0022625">
    <property type="term" value="C:cytosolic large ribosomal subunit"/>
    <property type="evidence" value="ECO:0007669"/>
    <property type="project" value="TreeGrafter"/>
</dbReference>
<dbReference type="GO" id="GO:0003735">
    <property type="term" value="F:structural constituent of ribosome"/>
    <property type="evidence" value="ECO:0007669"/>
    <property type="project" value="InterPro"/>
</dbReference>
<dbReference type="GO" id="GO:0006412">
    <property type="term" value="P:translation"/>
    <property type="evidence" value="ECO:0007669"/>
    <property type="project" value="UniProtKB-UniRule"/>
</dbReference>
<dbReference type="CDD" id="cd01658">
    <property type="entry name" value="Ribosomal_L30"/>
    <property type="match status" value="1"/>
</dbReference>
<dbReference type="FunFam" id="3.30.1390.20:FF:000001">
    <property type="entry name" value="50S ribosomal protein L30"/>
    <property type="match status" value="1"/>
</dbReference>
<dbReference type="Gene3D" id="3.30.1390.20">
    <property type="entry name" value="Ribosomal protein L30, ferredoxin-like fold domain"/>
    <property type="match status" value="1"/>
</dbReference>
<dbReference type="HAMAP" id="MF_01371_B">
    <property type="entry name" value="Ribosomal_uL30_B"/>
    <property type="match status" value="1"/>
</dbReference>
<dbReference type="InterPro" id="IPR036919">
    <property type="entry name" value="Ribo_uL30_ferredoxin-like_sf"/>
</dbReference>
<dbReference type="InterPro" id="IPR005996">
    <property type="entry name" value="Ribosomal_uL30_bac-type"/>
</dbReference>
<dbReference type="InterPro" id="IPR018038">
    <property type="entry name" value="Ribosomal_uL30_CS"/>
</dbReference>
<dbReference type="InterPro" id="IPR016082">
    <property type="entry name" value="Ribosomal_uL30_ferredoxin-like"/>
</dbReference>
<dbReference type="NCBIfam" id="TIGR01308">
    <property type="entry name" value="rpmD_bact"/>
    <property type="match status" value="1"/>
</dbReference>
<dbReference type="PANTHER" id="PTHR15892:SF2">
    <property type="entry name" value="LARGE RIBOSOMAL SUBUNIT PROTEIN UL30M"/>
    <property type="match status" value="1"/>
</dbReference>
<dbReference type="PANTHER" id="PTHR15892">
    <property type="entry name" value="MITOCHONDRIAL RIBOSOMAL PROTEIN L30"/>
    <property type="match status" value="1"/>
</dbReference>
<dbReference type="Pfam" id="PF00327">
    <property type="entry name" value="Ribosomal_L30"/>
    <property type="match status" value="1"/>
</dbReference>
<dbReference type="PIRSF" id="PIRSF002211">
    <property type="entry name" value="Ribosomal_L30_bac-type"/>
    <property type="match status" value="1"/>
</dbReference>
<dbReference type="SUPFAM" id="SSF55129">
    <property type="entry name" value="Ribosomal protein L30p/L7e"/>
    <property type="match status" value="1"/>
</dbReference>
<dbReference type="PROSITE" id="PS00634">
    <property type="entry name" value="RIBOSOMAL_L30"/>
    <property type="match status" value="1"/>
</dbReference>
<accession>C1B030</accession>
<name>RL30_RHOOB</name>
<evidence type="ECO:0000255" key="1">
    <source>
        <dbReference type="HAMAP-Rule" id="MF_01371"/>
    </source>
</evidence>
<evidence type="ECO:0000305" key="2"/>
<gene>
    <name evidence="1" type="primary">rpmD</name>
    <name type="ordered locus">ROP_62040</name>
</gene>
<protein>
    <recommendedName>
        <fullName evidence="1">Large ribosomal subunit protein uL30</fullName>
    </recommendedName>
    <alternativeName>
        <fullName evidence="2">50S ribosomal protein L30</fullName>
    </alternativeName>
</protein>
<keyword id="KW-0687">Ribonucleoprotein</keyword>
<keyword id="KW-0689">Ribosomal protein</keyword>
<sequence>MAELKVTQIKSTIGTKQNQRNSLRTLGLKGIRQTVVREDNAQNRGLINVVRHLVTVEEV</sequence>
<proteinExistence type="inferred from homology"/>
<comment type="subunit">
    <text evidence="1">Part of the 50S ribosomal subunit.</text>
</comment>
<comment type="similarity">
    <text evidence="1">Belongs to the universal ribosomal protein uL30 family.</text>
</comment>
<reference key="1">
    <citation type="submission" date="2009-03" db="EMBL/GenBank/DDBJ databases">
        <title>Comparison of the complete genome sequences of Rhodococcus erythropolis PR4 and Rhodococcus opacus B4.</title>
        <authorList>
            <person name="Takarada H."/>
            <person name="Sekine M."/>
            <person name="Hosoyama A."/>
            <person name="Yamada R."/>
            <person name="Fujisawa T."/>
            <person name="Omata S."/>
            <person name="Shimizu A."/>
            <person name="Tsukatani N."/>
            <person name="Tanikawa S."/>
            <person name="Fujita N."/>
            <person name="Harayama S."/>
        </authorList>
    </citation>
    <scope>NUCLEOTIDE SEQUENCE [LARGE SCALE GENOMIC DNA]</scope>
    <source>
        <strain>B4</strain>
    </source>
</reference>
<organism>
    <name type="scientific">Rhodococcus opacus (strain B4)</name>
    <dbReference type="NCBI Taxonomy" id="632772"/>
    <lineage>
        <taxon>Bacteria</taxon>
        <taxon>Bacillati</taxon>
        <taxon>Actinomycetota</taxon>
        <taxon>Actinomycetes</taxon>
        <taxon>Mycobacteriales</taxon>
        <taxon>Nocardiaceae</taxon>
        <taxon>Rhodococcus</taxon>
    </lineage>
</organism>